<sequence length="416" mass="47229">MKHASEFLNFIQERGYLYQCTNIEGLDQLLLQSNYIVAYIGFDCTAPSLHAGHLIQIMMLCHLQKFGYKPIVLLGGGTTKIGDPSFKDKARSILPVENINQNTSSIRRILEKMVSFNDSKTGAMIVNNADWLDNIKYIDFLRDIGAYFSVNRMLSFDSVKTRLDREQTLSFLEFNYMLLQAYDFIELNKKYDCRLQIGGSDQWGNIVNGIELGKKLNLPELFGLTMPLLLNAQGKKMGKTESGAVWLDDNMLKPYDYWQYFRNVDDQDVGRFLRLLTDVPIDEIRKLESLKDQEINEAKKVLATEVTKICHGDKEAELAQFAAISAFENEDSSLLPDYIIKKEQVASGISLVDLLHDTGFEPSKGAAKRLIQGNGCKINDNVVNNIDHVINFESFKDQPFIKLSAGKKRHIKVVVD</sequence>
<comment type="function">
    <text evidence="1">Catalyzes the attachment of tyrosine to tRNA(Tyr) in a two-step reaction: tyrosine is first activated by ATP to form Tyr-AMP and then transferred to the acceptor end of tRNA(Tyr).</text>
</comment>
<comment type="catalytic activity">
    <reaction evidence="1">
        <text>tRNA(Tyr) + L-tyrosine + ATP = L-tyrosyl-tRNA(Tyr) + AMP + diphosphate + H(+)</text>
        <dbReference type="Rhea" id="RHEA:10220"/>
        <dbReference type="Rhea" id="RHEA-COMP:9706"/>
        <dbReference type="Rhea" id="RHEA-COMP:9707"/>
        <dbReference type="ChEBI" id="CHEBI:15378"/>
        <dbReference type="ChEBI" id="CHEBI:30616"/>
        <dbReference type="ChEBI" id="CHEBI:33019"/>
        <dbReference type="ChEBI" id="CHEBI:58315"/>
        <dbReference type="ChEBI" id="CHEBI:78442"/>
        <dbReference type="ChEBI" id="CHEBI:78536"/>
        <dbReference type="ChEBI" id="CHEBI:456215"/>
        <dbReference type="EC" id="6.1.1.1"/>
    </reaction>
</comment>
<comment type="subunit">
    <text evidence="1">Homodimer.</text>
</comment>
<comment type="subcellular location">
    <subcellularLocation>
        <location evidence="1">Cytoplasm</location>
    </subcellularLocation>
</comment>
<comment type="similarity">
    <text evidence="1">Belongs to the class-I aminoacyl-tRNA synthetase family. TyrS type 1 subfamily.</text>
</comment>
<gene>
    <name evidence="1" type="primary">tyrS</name>
    <name type="ordered locus">WRi_012890</name>
</gene>
<name>SYY_WOLWR</name>
<reference key="1">
    <citation type="journal article" date="2009" name="Proc. Natl. Acad. Sci. U.S.A.">
        <title>The mosaic genome structure of the Wolbachia wRi strain infecting Drosophila simulans.</title>
        <authorList>
            <person name="Klasson L."/>
            <person name="Westberg J."/>
            <person name="Sapountzis P."/>
            <person name="Naeslund K."/>
            <person name="Lutnaes Y."/>
            <person name="Darby A.C."/>
            <person name="Veneti Z."/>
            <person name="Chen L."/>
            <person name="Braig H.R."/>
            <person name="Garrett R."/>
            <person name="Bourtzis K."/>
            <person name="Andersson S.G."/>
        </authorList>
    </citation>
    <scope>NUCLEOTIDE SEQUENCE [LARGE SCALE GENOMIC DNA]</scope>
    <source>
        <strain>wRi</strain>
    </source>
</reference>
<keyword id="KW-0030">Aminoacyl-tRNA synthetase</keyword>
<keyword id="KW-0067">ATP-binding</keyword>
<keyword id="KW-0963">Cytoplasm</keyword>
<keyword id="KW-0436">Ligase</keyword>
<keyword id="KW-0547">Nucleotide-binding</keyword>
<keyword id="KW-0648">Protein biosynthesis</keyword>
<keyword id="KW-0694">RNA-binding</keyword>
<dbReference type="EC" id="6.1.1.1" evidence="1"/>
<dbReference type="EMBL" id="CP001391">
    <property type="protein sequence ID" value="ACN95967.1"/>
    <property type="molecule type" value="Genomic_DNA"/>
</dbReference>
<dbReference type="RefSeq" id="WP_007548582.1">
    <property type="nucleotide sequence ID" value="NZ_MKIF01000108.1"/>
</dbReference>
<dbReference type="SMR" id="C0R4X5"/>
<dbReference type="STRING" id="66084.WRi_012890"/>
<dbReference type="GeneID" id="70036589"/>
<dbReference type="KEGG" id="wri:WRi_012890"/>
<dbReference type="HOGENOM" id="CLU_024003_0_3_5"/>
<dbReference type="Proteomes" id="UP000001293">
    <property type="component" value="Chromosome"/>
</dbReference>
<dbReference type="GO" id="GO:0005829">
    <property type="term" value="C:cytosol"/>
    <property type="evidence" value="ECO:0007669"/>
    <property type="project" value="TreeGrafter"/>
</dbReference>
<dbReference type="GO" id="GO:0005524">
    <property type="term" value="F:ATP binding"/>
    <property type="evidence" value="ECO:0007669"/>
    <property type="project" value="UniProtKB-UniRule"/>
</dbReference>
<dbReference type="GO" id="GO:0003723">
    <property type="term" value="F:RNA binding"/>
    <property type="evidence" value="ECO:0007669"/>
    <property type="project" value="UniProtKB-KW"/>
</dbReference>
<dbReference type="GO" id="GO:0004831">
    <property type="term" value="F:tyrosine-tRNA ligase activity"/>
    <property type="evidence" value="ECO:0007669"/>
    <property type="project" value="UniProtKB-UniRule"/>
</dbReference>
<dbReference type="GO" id="GO:0006437">
    <property type="term" value="P:tyrosyl-tRNA aminoacylation"/>
    <property type="evidence" value="ECO:0007669"/>
    <property type="project" value="UniProtKB-UniRule"/>
</dbReference>
<dbReference type="CDD" id="cd00165">
    <property type="entry name" value="S4"/>
    <property type="match status" value="1"/>
</dbReference>
<dbReference type="CDD" id="cd00805">
    <property type="entry name" value="TyrRS_core"/>
    <property type="match status" value="1"/>
</dbReference>
<dbReference type="FunFam" id="1.10.240.10:FF:000001">
    <property type="entry name" value="Tyrosine--tRNA ligase"/>
    <property type="match status" value="1"/>
</dbReference>
<dbReference type="Gene3D" id="3.40.50.620">
    <property type="entry name" value="HUPs"/>
    <property type="match status" value="1"/>
</dbReference>
<dbReference type="Gene3D" id="3.10.290.10">
    <property type="entry name" value="RNA-binding S4 domain"/>
    <property type="match status" value="1"/>
</dbReference>
<dbReference type="Gene3D" id="1.10.240.10">
    <property type="entry name" value="Tyrosyl-Transfer RNA Synthetase"/>
    <property type="match status" value="1"/>
</dbReference>
<dbReference type="HAMAP" id="MF_02006">
    <property type="entry name" value="Tyr_tRNA_synth_type1"/>
    <property type="match status" value="1"/>
</dbReference>
<dbReference type="InterPro" id="IPR002305">
    <property type="entry name" value="aa-tRNA-synth_Ic"/>
</dbReference>
<dbReference type="InterPro" id="IPR014729">
    <property type="entry name" value="Rossmann-like_a/b/a_fold"/>
</dbReference>
<dbReference type="InterPro" id="IPR036986">
    <property type="entry name" value="S4_RNA-bd_sf"/>
</dbReference>
<dbReference type="InterPro" id="IPR054608">
    <property type="entry name" value="SYY-like_C"/>
</dbReference>
<dbReference type="InterPro" id="IPR002307">
    <property type="entry name" value="Tyr-tRNA-ligase"/>
</dbReference>
<dbReference type="InterPro" id="IPR024088">
    <property type="entry name" value="Tyr-tRNA-ligase_bac-type"/>
</dbReference>
<dbReference type="InterPro" id="IPR024107">
    <property type="entry name" value="Tyr-tRNA-ligase_bac_1"/>
</dbReference>
<dbReference type="NCBIfam" id="TIGR00234">
    <property type="entry name" value="tyrS"/>
    <property type="match status" value="1"/>
</dbReference>
<dbReference type="PANTHER" id="PTHR11766:SF0">
    <property type="entry name" value="TYROSINE--TRNA LIGASE, MITOCHONDRIAL"/>
    <property type="match status" value="1"/>
</dbReference>
<dbReference type="PANTHER" id="PTHR11766">
    <property type="entry name" value="TYROSYL-TRNA SYNTHETASE"/>
    <property type="match status" value="1"/>
</dbReference>
<dbReference type="Pfam" id="PF22421">
    <property type="entry name" value="SYY_C-terminal"/>
    <property type="match status" value="1"/>
</dbReference>
<dbReference type="Pfam" id="PF00579">
    <property type="entry name" value="tRNA-synt_1b"/>
    <property type="match status" value="1"/>
</dbReference>
<dbReference type="PRINTS" id="PR01040">
    <property type="entry name" value="TRNASYNTHTYR"/>
</dbReference>
<dbReference type="SUPFAM" id="SSF55174">
    <property type="entry name" value="Alpha-L RNA-binding motif"/>
    <property type="match status" value="1"/>
</dbReference>
<dbReference type="SUPFAM" id="SSF52374">
    <property type="entry name" value="Nucleotidylyl transferase"/>
    <property type="match status" value="1"/>
</dbReference>
<dbReference type="PROSITE" id="PS50889">
    <property type="entry name" value="S4"/>
    <property type="match status" value="1"/>
</dbReference>
<evidence type="ECO:0000255" key="1">
    <source>
        <dbReference type="HAMAP-Rule" id="MF_02006"/>
    </source>
</evidence>
<organism>
    <name type="scientific">Wolbachia sp. subsp. Drosophila simulans (strain wRi)</name>
    <dbReference type="NCBI Taxonomy" id="66084"/>
    <lineage>
        <taxon>Bacteria</taxon>
        <taxon>Pseudomonadati</taxon>
        <taxon>Pseudomonadota</taxon>
        <taxon>Alphaproteobacteria</taxon>
        <taxon>Rickettsiales</taxon>
        <taxon>Anaplasmataceae</taxon>
        <taxon>Wolbachieae</taxon>
        <taxon>Wolbachia</taxon>
    </lineage>
</organism>
<proteinExistence type="inferred from homology"/>
<feature type="chain" id="PRO_1000189347" description="Tyrosine--tRNA ligase">
    <location>
        <begin position="1"/>
        <end position="416"/>
    </location>
</feature>
<feature type="domain" description="S4 RNA-binding" evidence="1">
    <location>
        <begin position="349"/>
        <end position="414"/>
    </location>
</feature>
<feature type="short sequence motif" description="'HIGH' region">
    <location>
        <begin position="44"/>
        <end position="53"/>
    </location>
</feature>
<feature type="short sequence motif" description="'KMSKS' region">
    <location>
        <begin position="236"/>
        <end position="240"/>
    </location>
</feature>
<feature type="binding site" evidence="1">
    <location>
        <position position="39"/>
    </location>
    <ligand>
        <name>L-tyrosine</name>
        <dbReference type="ChEBI" id="CHEBI:58315"/>
    </ligand>
</feature>
<feature type="binding site" evidence="1">
    <location>
        <position position="176"/>
    </location>
    <ligand>
        <name>L-tyrosine</name>
        <dbReference type="ChEBI" id="CHEBI:58315"/>
    </ligand>
</feature>
<feature type="binding site" evidence="1">
    <location>
        <position position="180"/>
    </location>
    <ligand>
        <name>L-tyrosine</name>
        <dbReference type="ChEBI" id="CHEBI:58315"/>
    </ligand>
</feature>
<feature type="binding site" evidence="1">
    <location>
        <position position="239"/>
    </location>
    <ligand>
        <name>ATP</name>
        <dbReference type="ChEBI" id="CHEBI:30616"/>
    </ligand>
</feature>
<protein>
    <recommendedName>
        <fullName evidence="1">Tyrosine--tRNA ligase</fullName>
        <ecNumber evidence="1">6.1.1.1</ecNumber>
    </recommendedName>
    <alternativeName>
        <fullName evidence="1">Tyrosyl-tRNA synthetase</fullName>
        <shortName evidence="1">TyrRS</shortName>
    </alternativeName>
</protein>
<accession>C0R4X5</accession>